<protein>
    <recommendedName>
        <fullName>NADH-ubiquinone oxidoreductase 78 kDa subunit, mitochondrial</fullName>
        <ecNumber>7.1.1.2</ecNumber>
    </recommendedName>
    <alternativeName>
        <fullName>Complex I-78kD</fullName>
        <shortName>CI-78kD</shortName>
    </alternativeName>
</protein>
<proteinExistence type="evidence at protein level"/>
<sequence>MLRSTLSRSAWRTGRHQAARNASRAFSATAQRPAEVELTIDGKKVSIEAGSALIQACEKAGVTIPRYCYHEKLMIAGNCRMCLVEVEKVPKPVASCAWPVQPGMVVKTNSPLTHKAREGVMEFLLANHPLDCPICDQGGECDLQDQSMRYGGDRGRFHEVGGKRAVEDKNMGPLIKTSMNRCIQCTRCVRFANDIAGAPELGSTGRGNDLQIGTYLEKNLDSELSGNVIDLCPVGALTSKPYAFRARPWELKKTESIDVLDGLGSNIRVDTRGLEVMRILPRLNDEVNEEWINDKTRFACDGLKTQRLTIPLVRREGKFEPASWDQALTEIAHAYQTLNPQGNEFKAIAGQLTEVESLVAMKDLANRLGSENLALDMPSGHKPLAHGVDVRSNYIFNSSIVGIESADVILLVGTNPRHEAAVLNARIRKQWLRSDLEIGVVGQTWDSTFEFEHLGTDHAALQKALEGDFGKKLQSAKNPMIIVGSGVTDHGDANAFYETVGKFVDSNASNFLTEEWNGYNVLQRAASRVGAFEVGFTVPSAEIAQTKPKFVWLLGADEFNEADIPKDAFIVYQGHHGDRGAQIADIVLPGAAYTEKAGTYVNTEGRVQMTRAATGLPGAARTDWKILRAVSEYLGVRLPYDDVAQLRDRMVEISPALSSYDIIEPPSLQQLSKVQLVEQNQGATATNEPLKKVIENFYFTDAISRSSPTMARCSAAKKTGDPRTNFMAPGMEEDRPMGQIAYGA</sequence>
<comment type="function">
    <text>Core subunit of the mitochondrial membrane respiratory chain NADH dehydrogenase (Complex I) that is believed to belong to the minimal assembly required for catalysis. Complex I functions in the transfer of electrons from NADH to the respiratory chain. The immediate electron acceptor for the enzyme is believed to be ubiquinone. This is the largest subunit of complex I and it is a component of the iron-sulfur (IP) fragment of the enzyme. It may form part of the active site crevice where NADH is oxidized.</text>
</comment>
<comment type="catalytic activity">
    <reaction>
        <text>a ubiquinone + NADH + 5 H(+)(in) = a ubiquinol + NAD(+) + 4 H(+)(out)</text>
        <dbReference type="Rhea" id="RHEA:29091"/>
        <dbReference type="Rhea" id="RHEA-COMP:9565"/>
        <dbReference type="Rhea" id="RHEA-COMP:9566"/>
        <dbReference type="ChEBI" id="CHEBI:15378"/>
        <dbReference type="ChEBI" id="CHEBI:16389"/>
        <dbReference type="ChEBI" id="CHEBI:17976"/>
        <dbReference type="ChEBI" id="CHEBI:57540"/>
        <dbReference type="ChEBI" id="CHEBI:57945"/>
        <dbReference type="EC" id="7.1.1.2"/>
    </reaction>
</comment>
<comment type="cofactor">
    <cofactor evidence="1">
        <name>[2Fe-2S] cluster</name>
        <dbReference type="ChEBI" id="CHEBI:190135"/>
    </cofactor>
    <text evidence="1">Binds 1 [2Fe-2S] cluster per subunit.</text>
</comment>
<comment type="cofactor">
    <cofactor evidence="1">
        <name>[4Fe-4S] cluster</name>
        <dbReference type="ChEBI" id="CHEBI:49883"/>
    </cofactor>
    <text evidence="1">Binds 2 [4Fe-4S] clusters per subunit.</text>
</comment>
<comment type="subunit">
    <text>Complex I is composed of about 40 different subunits.</text>
</comment>
<comment type="subcellular location">
    <subcellularLocation>
        <location>Mitochondrion inner membrane</location>
    </subcellularLocation>
</comment>
<comment type="similarity">
    <text evidence="7">Belongs to the complex I 75 kDa subunit family.</text>
</comment>
<feature type="transit peptide" description="Mitochondrion" evidence="6">
    <location>
        <begin position="1"/>
        <end position="33"/>
    </location>
</feature>
<feature type="chain" id="PRO_0000019974" description="NADH-ubiquinone oxidoreductase 78 kDa subunit, mitochondrial">
    <location>
        <begin position="34"/>
        <end position="744"/>
    </location>
</feature>
<feature type="domain" description="2Fe-2S ferredoxin-type" evidence="2">
    <location>
        <begin position="34"/>
        <end position="112"/>
    </location>
</feature>
<feature type="domain" description="4Fe-4S His(Cys)3-ligated-type" evidence="4">
    <location>
        <begin position="112"/>
        <end position="151"/>
    </location>
</feature>
<feature type="domain" description="4Fe-4S Mo/W bis-MGD-type" evidence="3">
    <location>
        <begin position="251"/>
        <end position="307"/>
    </location>
</feature>
<feature type="region of interest" description="Disordered" evidence="5">
    <location>
        <begin position="1"/>
        <end position="26"/>
    </location>
</feature>
<feature type="compositionally biased region" description="Polar residues" evidence="5">
    <location>
        <begin position="1"/>
        <end position="10"/>
    </location>
</feature>
<feature type="binding site" evidence="1">
    <location>
        <position position="68"/>
    </location>
    <ligand>
        <name>[2Fe-2S] cluster</name>
        <dbReference type="ChEBI" id="CHEBI:190135"/>
    </ligand>
</feature>
<feature type="binding site" evidence="1">
    <location>
        <position position="79"/>
    </location>
    <ligand>
        <name>[2Fe-2S] cluster</name>
        <dbReference type="ChEBI" id="CHEBI:190135"/>
    </ligand>
</feature>
<feature type="binding site" evidence="1">
    <location>
        <position position="82"/>
    </location>
    <ligand>
        <name>[2Fe-2S] cluster</name>
        <dbReference type="ChEBI" id="CHEBI:190135"/>
    </ligand>
</feature>
<feature type="binding site" evidence="1">
    <location>
        <position position="96"/>
    </location>
    <ligand>
        <name>[2Fe-2S] cluster</name>
        <dbReference type="ChEBI" id="CHEBI:190135"/>
    </ligand>
</feature>
<feature type="binding site" evidence="4">
    <location>
        <position position="128"/>
    </location>
    <ligand>
        <name>[4Fe-4S] cluster</name>
        <dbReference type="ChEBI" id="CHEBI:49883"/>
        <label>1</label>
    </ligand>
</feature>
<feature type="binding site" evidence="4">
    <location>
        <position position="132"/>
    </location>
    <ligand>
        <name>[4Fe-4S] cluster</name>
        <dbReference type="ChEBI" id="CHEBI:49883"/>
        <label>1</label>
    </ligand>
</feature>
<feature type="binding site" evidence="4">
    <location>
        <position position="135"/>
    </location>
    <ligand>
        <name>[4Fe-4S] cluster</name>
        <dbReference type="ChEBI" id="CHEBI:49883"/>
        <label>1</label>
    </ligand>
</feature>
<feature type="binding site" evidence="4">
    <location>
        <position position="141"/>
    </location>
    <ligand>
        <name>[4Fe-4S] cluster</name>
        <dbReference type="ChEBI" id="CHEBI:49883"/>
        <label>1</label>
    </ligand>
</feature>
<feature type="binding site" evidence="1">
    <location>
        <position position="182"/>
    </location>
    <ligand>
        <name>[4Fe-4S] cluster</name>
        <dbReference type="ChEBI" id="CHEBI:49883"/>
        <label>2</label>
    </ligand>
</feature>
<feature type="binding site" evidence="1">
    <location>
        <position position="185"/>
    </location>
    <ligand>
        <name>[4Fe-4S] cluster</name>
        <dbReference type="ChEBI" id="CHEBI:49883"/>
        <label>2</label>
    </ligand>
</feature>
<feature type="binding site" evidence="1">
    <location>
        <position position="188"/>
    </location>
    <ligand>
        <name>[4Fe-4S] cluster</name>
        <dbReference type="ChEBI" id="CHEBI:49883"/>
        <label>2</label>
    </ligand>
</feature>
<feature type="binding site" evidence="1">
    <location>
        <position position="232"/>
    </location>
    <ligand>
        <name>[4Fe-4S] cluster</name>
        <dbReference type="ChEBI" id="CHEBI:49883"/>
        <label>2</label>
    </ligand>
</feature>
<feature type="sequence conflict" description="In Ref. 1; CAA40828." evidence="7" ref="1">
    <original>L</original>
    <variation>P</variation>
    <location>
        <position position="125"/>
    </location>
</feature>
<feature type="sequence conflict" description="In Ref. 1; CAA40828." evidence="7" ref="1">
    <original>G</original>
    <variation>R</variation>
    <location>
        <position position="152"/>
    </location>
</feature>
<feature type="sequence conflict" description="In Ref. 1; CAA40828." evidence="7" ref="1">
    <original>R</original>
    <variation>Q</variation>
    <location>
        <position position="164"/>
    </location>
</feature>
<feature type="sequence conflict" description="In Ref. 1; CAA40828." evidence="7" ref="1">
    <original>P</original>
    <variation>A</variation>
    <location>
        <position position="340"/>
    </location>
</feature>
<feature type="sequence conflict" description="In Ref. 1; CAA40828." evidence="7" ref="1">
    <original>SGHKPLAHGV</original>
    <variation>FGPQTSCSWC</variation>
    <location>
        <begin position="379"/>
        <end position="388"/>
    </location>
</feature>
<feature type="sequence conflict" description="In Ref. 1; CAA40828." evidence="7" ref="1">
    <original>A</original>
    <variation>R</variation>
    <location>
        <position position="493"/>
    </location>
</feature>
<feature type="sequence conflict" description="In Ref. 1; CAA40828." evidence="7" ref="1">
    <original>SRVGAFEV</original>
    <variation>PESAPSRL</variation>
    <location>
        <begin position="527"/>
        <end position="534"/>
    </location>
</feature>
<feature type="sequence conflict" description="In Ref. 1; CAA40828." evidence="7" ref="1">
    <original>PS</original>
    <variation>SL</variation>
    <location>
        <begin position="666"/>
        <end position="667"/>
    </location>
</feature>
<feature type="sequence conflict" description="In Ref. 1; CAA40828." evidence="7" ref="1">
    <original>P</original>
    <variation>S</variation>
    <location>
        <position position="722"/>
    </location>
</feature>
<feature type="sequence conflict" description="In Ref. 1; CAA40828." evidence="7" ref="1">
    <original>MAP</original>
    <variation>IGS</variation>
    <location>
        <begin position="727"/>
        <end position="729"/>
    </location>
</feature>
<feature type="sequence conflict" description="In Ref. 1; CAA40828." evidence="7" ref="1">
    <original>I</original>
    <variation>Y</variation>
    <location>
        <position position="740"/>
    </location>
</feature>
<name>NDUS1_NEUCR</name>
<keyword id="KW-0001">2Fe-2S</keyword>
<keyword id="KW-0004">4Fe-4S</keyword>
<keyword id="KW-0903">Direct protein sequencing</keyword>
<keyword id="KW-0249">Electron transport</keyword>
<keyword id="KW-0408">Iron</keyword>
<keyword id="KW-0411">Iron-sulfur</keyword>
<keyword id="KW-0472">Membrane</keyword>
<keyword id="KW-0479">Metal-binding</keyword>
<keyword id="KW-0496">Mitochondrion</keyword>
<keyword id="KW-0999">Mitochondrion inner membrane</keyword>
<keyword id="KW-0520">NAD</keyword>
<keyword id="KW-0560">Oxidoreductase</keyword>
<keyword id="KW-1185">Reference proteome</keyword>
<keyword id="KW-0679">Respiratory chain</keyword>
<keyword id="KW-0809">Transit peptide</keyword>
<keyword id="KW-1278">Translocase</keyword>
<keyword id="KW-0813">Transport</keyword>
<keyword id="KW-0830">Ubiquinone</keyword>
<dbReference type="EC" id="7.1.1.2"/>
<dbReference type="EMBL" id="X57602">
    <property type="protein sequence ID" value="CAA40828.1"/>
    <property type="molecule type" value="mRNA"/>
</dbReference>
<dbReference type="EMBL" id="AL355926">
    <property type="protein sequence ID" value="CAB91229.1"/>
    <property type="molecule type" value="Genomic_DNA"/>
</dbReference>
<dbReference type="EMBL" id="CM002237">
    <property type="protein sequence ID" value="EAA27952.3"/>
    <property type="molecule type" value="Genomic_DNA"/>
</dbReference>
<dbReference type="PIR" id="S17664">
    <property type="entry name" value="S17664"/>
</dbReference>
<dbReference type="PIR" id="T49428">
    <property type="entry name" value="T49428"/>
</dbReference>
<dbReference type="RefSeq" id="XP_957188.3">
    <property type="nucleotide sequence ID" value="XM_952095.3"/>
</dbReference>
<dbReference type="SMR" id="P24918"/>
<dbReference type="STRING" id="367110.P24918"/>
<dbReference type="TCDB" id="3.D.1.6.2">
    <property type="family name" value="the h+ or na+-translocating nadh dehydrogenase (ndh) family"/>
</dbReference>
<dbReference type="PaxDb" id="5141-EFNCRP00000001842"/>
<dbReference type="EnsemblFungi" id="EAA27952">
    <property type="protein sequence ID" value="EAA27952"/>
    <property type="gene ID" value="NCU01765"/>
</dbReference>
<dbReference type="GeneID" id="3873340"/>
<dbReference type="KEGG" id="ncr:NCU01765"/>
<dbReference type="VEuPathDB" id="FungiDB:NCU01765"/>
<dbReference type="HOGENOM" id="CLU_000422_11_6_1"/>
<dbReference type="InParanoid" id="P24918"/>
<dbReference type="OrthoDB" id="10249365at2759"/>
<dbReference type="Proteomes" id="UP000001805">
    <property type="component" value="Chromosome 6, Linkage Group II"/>
</dbReference>
<dbReference type="GO" id="GO:0016020">
    <property type="term" value="C:membrane"/>
    <property type="evidence" value="ECO:0000318"/>
    <property type="project" value="GO_Central"/>
</dbReference>
<dbReference type="GO" id="GO:0005743">
    <property type="term" value="C:mitochondrial inner membrane"/>
    <property type="evidence" value="ECO:0007669"/>
    <property type="project" value="UniProtKB-SubCell"/>
</dbReference>
<dbReference type="GO" id="GO:0051537">
    <property type="term" value="F:2 iron, 2 sulfur cluster binding"/>
    <property type="evidence" value="ECO:0007669"/>
    <property type="project" value="UniProtKB-KW"/>
</dbReference>
<dbReference type="GO" id="GO:0051539">
    <property type="term" value="F:4 iron, 4 sulfur cluster binding"/>
    <property type="evidence" value="ECO:0007669"/>
    <property type="project" value="UniProtKB-KW"/>
</dbReference>
<dbReference type="GO" id="GO:0046872">
    <property type="term" value="F:metal ion binding"/>
    <property type="evidence" value="ECO:0007669"/>
    <property type="project" value="UniProtKB-KW"/>
</dbReference>
<dbReference type="GO" id="GO:0008137">
    <property type="term" value="F:NADH dehydrogenase (ubiquinone) activity"/>
    <property type="evidence" value="ECO:0007669"/>
    <property type="project" value="UniProtKB-EC"/>
</dbReference>
<dbReference type="GO" id="GO:0042773">
    <property type="term" value="P:ATP synthesis coupled electron transport"/>
    <property type="evidence" value="ECO:0007669"/>
    <property type="project" value="InterPro"/>
</dbReference>
<dbReference type="CDD" id="cd00207">
    <property type="entry name" value="fer2"/>
    <property type="match status" value="1"/>
</dbReference>
<dbReference type="CDD" id="cd02773">
    <property type="entry name" value="MopB_Res-Cmplx1_Nad11"/>
    <property type="match status" value="1"/>
</dbReference>
<dbReference type="FunFam" id="3.10.20.740:FF:000001">
    <property type="entry name" value="NADH-quinone oxidoreductase subunit G"/>
    <property type="match status" value="1"/>
</dbReference>
<dbReference type="FunFam" id="3.30.200.210:FF:000002">
    <property type="entry name" value="NADH-ubiquinone oxidoreductase 75 kDa subunit"/>
    <property type="match status" value="1"/>
</dbReference>
<dbReference type="FunFam" id="3.30.70.20:FF:000002">
    <property type="entry name" value="NADH-ubiquinone oxidoreductase 75 kDa subunit"/>
    <property type="match status" value="1"/>
</dbReference>
<dbReference type="FunFam" id="3.40.50.740:FF:000033">
    <property type="entry name" value="NUAM protein"/>
    <property type="match status" value="1"/>
</dbReference>
<dbReference type="Gene3D" id="3.10.20.740">
    <property type="match status" value="1"/>
</dbReference>
<dbReference type="Gene3D" id="3.30.200.210">
    <property type="match status" value="1"/>
</dbReference>
<dbReference type="Gene3D" id="3.30.70.20">
    <property type="match status" value="1"/>
</dbReference>
<dbReference type="Gene3D" id="3.40.50.740">
    <property type="match status" value="1"/>
</dbReference>
<dbReference type="InterPro" id="IPR036010">
    <property type="entry name" value="2Fe-2S_ferredoxin-like_sf"/>
</dbReference>
<dbReference type="InterPro" id="IPR001041">
    <property type="entry name" value="2Fe-2S_ferredoxin-type"/>
</dbReference>
<dbReference type="InterPro" id="IPR006656">
    <property type="entry name" value="Mopterin_OxRdtase"/>
</dbReference>
<dbReference type="InterPro" id="IPR006963">
    <property type="entry name" value="Mopterin_OxRdtase_4Fe-4S_dom"/>
</dbReference>
<dbReference type="InterPro" id="IPR000283">
    <property type="entry name" value="NADH_UbQ_OxRdtase_75kDa_su_CS"/>
</dbReference>
<dbReference type="InterPro" id="IPR054351">
    <property type="entry name" value="NADH_UbQ_OxRdtase_ferredoxin"/>
</dbReference>
<dbReference type="InterPro" id="IPR010228">
    <property type="entry name" value="NADH_UbQ_OxRdtase_Gsu"/>
</dbReference>
<dbReference type="InterPro" id="IPR019574">
    <property type="entry name" value="NADH_UbQ_OxRdtase_Gsu_4Fe4S-bd"/>
</dbReference>
<dbReference type="InterPro" id="IPR015405">
    <property type="entry name" value="NDUFS1-like_C"/>
</dbReference>
<dbReference type="InterPro" id="IPR050123">
    <property type="entry name" value="Prok_molybdopt-oxidoreductase"/>
</dbReference>
<dbReference type="NCBIfam" id="TIGR01973">
    <property type="entry name" value="NuoG"/>
    <property type="match status" value="1"/>
</dbReference>
<dbReference type="PANTHER" id="PTHR43105:SF13">
    <property type="entry name" value="NADH-UBIQUINONE OXIDOREDUCTASE 75 KDA SUBUNIT, MITOCHONDRIAL"/>
    <property type="match status" value="1"/>
</dbReference>
<dbReference type="PANTHER" id="PTHR43105">
    <property type="entry name" value="RESPIRATORY NITRATE REDUCTASE"/>
    <property type="match status" value="1"/>
</dbReference>
<dbReference type="Pfam" id="PF13510">
    <property type="entry name" value="Fer2_4"/>
    <property type="match status" value="1"/>
</dbReference>
<dbReference type="Pfam" id="PF22151">
    <property type="entry name" value="Fer4_NDSU1"/>
    <property type="match status" value="1"/>
</dbReference>
<dbReference type="Pfam" id="PF22117">
    <property type="entry name" value="Fer4_Nqo3"/>
    <property type="match status" value="1"/>
</dbReference>
<dbReference type="Pfam" id="PF00384">
    <property type="entry name" value="Molybdopterin"/>
    <property type="match status" value="1"/>
</dbReference>
<dbReference type="Pfam" id="PF10588">
    <property type="entry name" value="NADH-G_4Fe-4S_3"/>
    <property type="match status" value="1"/>
</dbReference>
<dbReference type="Pfam" id="PF09326">
    <property type="entry name" value="NADH_dhqG_C"/>
    <property type="match status" value="1"/>
</dbReference>
<dbReference type="SMART" id="SM00929">
    <property type="entry name" value="NADH-G_4Fe-4S_3"/>
    <property type="match status" value="1"/>
</dbReference>
<dbReference type="SUPFAM" id="SSF54292">
    <property type="entry name" value="2Fe-2S ferredoxin-like"/>
    <property type="match status" value="1"/>
</dbReference>
<dbReference type="SUPFAM" id="SSF54862">
    <property type="entry name" value="4Fe-4S ferredoxins"/>
    <property type="match status" value="1"/>
</dbReference>
<dbReference type="SUPFAM" id="SSF53706">
    <property type="entry name" value="Formate dehydrogenase/DMSO reductase, domains 1-3"/>
    <property type="match status" value="1"/>
</dbReference>
<dbReference type="PROSITE" id="PS51085">
    <property type="entry name" value="2FE2S_FER_2"/>
    <property type="match status" value="1"/>
</dbReference>
<dbReference type="PROSITE" id="PS51839">
    <property type="entry name" value="4FE4S_HC3"/>
    <property type="match status" value="1"/>
</dbReference>
<dbReference type="PROSITE" id="PS51669">
    <property type="entry name" value="4FE4S_MOW_BIS_MGD"/>
    <property type="match status" value="1"/>
</dbReference>
<dbReference type="PROSITE" id="PS00641">
    <property type="entry name" value="COMPLEX1_75K_1"/>
    <property type="match status" value="1"/>
</dbReference>
<dbReference type="PROSITE" id="PS00642">
    <property type="entry name" value="COMPLEX1_75K_2"/>
    <property type="match status" value="1"/>
</dbReference>
<dbReference type="PROSITE" id="PS00643">
    <property type="entry name" value="COMPLEX1_75K_3"/>
    <property type="match status" value="1"/>
</dbReference>
<organism>
    <name type="scientific">Neurospora crassa (strain ATCC 24698 / 74-OR23-1A / CBS 708.71 / DSM 1257 / FGSC 987)</name>
    <dbReference type="NCBI Taxonomy" id="367110"/>
    <lineage>
        <taxon>Eukaryota</taxon>
        <taxon>Fungi</taxon>
        <taxon>Dikarya</taxon>
        <taxon>Ascomycota</taxon>
        <taxon>Pezizomycotina</taxon>
        <taxon>Sordariomycetes</taxon>
        <taxon>Sordariomycetidae</taxon>
        <taxon>Sordariales</taxon>
        <taxon>Sordariaceae</taxon>
        <taxon>Neurospora</taxon>
    </lineage>
</organism>
<evidence type="ECO:0000250" key="1"/>
<evidence type="ECO:0000255" key="2">
    <source>
        <dbReference type="PROSITE-ProRule" id="PRU00465"/>
    </source>
</evidence>
<evidence type="ECO:0000255" key="3">
    <source>
        <dbReference type="PROSITE-ProRule" id="PRU01004"/>
    </source>
</evidence>
<evidence type="ECO:0000255" key="4">
    <source>
        <dbReference type="PROSITE-ProRule" id="PRU01184"/>
    </source>
</evidence>
<evidence type="ECO:0000256" key="5">
    <source>
        <dbReference type="SAM" id="MobiDB-lite"/>
    </source>
</evidence>
<evidence type="ECO:0000269" key="6">
    <source>
    </source>
</evidence>
<evidence type="ECO:0000305" key="7"/>
<gene>
    <name type="primary">nuo78</name>
    <name type="ORF">B17C10.90</name>
    <name type="ORF">NCU01765</name>
</gene>
<accession>P24918</accession>
<accession>Q7RV66</accession>
<accession>Q9P6E0</accession>
<reference key="1">
    <citation type="journal article" date="1991" name="Biochim. Biophys. Acta">
        <title>Primary structures of two subunits of NADH: ubiquinone reductase from Neurospora crassa concerned with NADH-oxidation. Relationship to a soluble NAD-reducing hydrogenase of Alcaligenes eutrophus.</title>
        <authorList>
            <person name="Preis D."/>
            <person name="Weidner U."/>
            <person name="Conzen C."/>
            <person name="Azevedo J.E."/>
            <person name="Nehls U."/>
            <person name="Roehlen D.-A."/>
            <person name="van der Pas J.C."/>
            <person name="Sackmann U."/>
            <person name="Schneider R."/>
            <person name="Werner S."/>
            <person name="Weiss H."/>
        </authorList>
    </citation>
    <scope>NUCLEOTIDE SEQUENCE [MRNA]</scope>
    <scope>PROTEIN SEQUENCE OF 34-64</scope>
    <source>
        <strain>74-ORS-6a / FGSC 4200</strain>
    </source>
</reference>
<reference key="2">
    <citation type="journal article" date="2003" name="Nucleic Acids Res.">
        <title>What's in the genome of a filamentous fungus? Analysis of the Neurospora genome sequence.</title>
        <authorList>
            <person name="Mannhaupt G."/>
            <person name="Montrone C."/>
            <person name="Haase D."/>
            <person name="Mewes H.-W."/>
            <person name="Aign V."/>
            <person name="Hoheisel J.D."/>
            <person name="Fartmann B."/>
            <person name="Nyakatura G."/>
            <person name="Kempken F."/>
            <person name="Maier J."/>
            <person name="Schulte U."/>
        </authorList>
    </citation>
    <scope>NUCLEOTIDE SEQUENCE [LARGE SCALE GENOMIC DNA]</scope>
    <source>
        <strain>ATCC 24698 / 74-OR23-1A / CBS 708.71 / DSM 1257 / FGSC 987</strain>
    </source>
</reference>
<reference key="3">
    <citation type="journal article" date="2003" name="Nature">
        <title>The genome sequence of the filamentous fungus Neurospora crassa.</title>
        <authorList>
            <person name="Galagan J.E."/>
            <person name="Calvo S.E."/>
            <person name="Borkovich K.A."/>
            <person name="Selker E.U."/>
            <person name="Read N.D."/>
            <person name="Jaffe D.B."/>
            <person name="FitzHugh W."/>
            <person name="Ma L.-J."/>
            <person name="Smirnov S."/>
            <person name="Purcell S."/>
            <person name="Rehman B."/>
            <person name="Elkins T."/>
            <person name="Engels R."/>
            <person name="Wang S."/>
            <person name="Nielsen C.B."/>
            <person name="Butler J."/>
            <person name="Endrizzi M."/>
            <person name="Qui D."/>
            <person name="Ianakiev P."/>
            <person name="Bell-Pedersen D."/>
            <person name="Nelson M.A."/>
            <person name="Werner-Washburne M."/>
            <person name="Selitrennikoff C.P."/>
            <person name="Kinsey J.A."/>
            <person name="Braun E.L."/>
            <person name="Zelter A."/>
            <person name="Schulte U."/>
            <person name="Kothe G.O."/>
            <person name="Jedd G."/>
            <person name="Mewes H.-W."/>
            <person name="Staben C."/>
            <person name="Marcotte E."/>
            <person name="Greenberg D."/>
            <person name="Roy A."/>
            <person name="Foley K."/>
            <person name="Naylor J."/>
            <person name="Stange-Thomann N."/>
            <person name="Barrett R."/>
            <person name="Gnerre S."/>
            <person name="Kamal M."/>
            <person name="Kamvysselis M."/>
            <person name="Mauceli E.W."/>
            <person name="Bielke C."/>
            <person name="Rudd S."/>
            <person name="Frishman D."/>
            <person name="Krystofova S."/>
            <person name="Rasmussen C."/>
            <person name="Metzenberg R.L."/>
            <person name="Perkins D.D."/>
            <person name="Kroken S."/>
            <person name="Cogoni C."/>
            <person name="Macino G."/>
            <person name="Catcheside D.E.A."/>
            <person name="Li W."/>
            <person name="Pratt R.J."/>
            <person name="Osmani S.A."/>
            <person name="DeSouza C.P.C."/>
            <person name="Glass N.L."/>
            <person name="Orbach M.J."/>
            <person name="Berglund J.A."/>
            <person name="Voelker R."/>
            <person name="Yarden O."/>
            <person name="Plamann M."/>
            <person name="Seiler S."/>
            <person name="Dunlap J.C."/>
            <person name="Radford A."/>
            <person name="Aramayo R."/>
            <person name="Natvig D.O."/>
            <person name="Alex L.A."/>
            <person name="Mannhaupt G."/>
            <person name="Ebbole D.J."/>
            <person name="Freitag M."/>
            <person name="Paulsen I."/>
            <person name="Sachs M.S."/>
            <person name="Lander E.S."/>
            <person name="Nusbaum C."/>
            <person name="Birren B.W."/>
        </authorList>
    </citation>
    <scope>NUCLEOTIDE SEQUENCE [LARGE SCALE GENOMIC DNA]</scope>
    <source>
        <strain>ATCC 24698 / 74-OR23-1A / CBS 708.71 / DSM 1257 / FGSC 987</strain>
    </source>
</reference>